<geneLocation type="mitochondrion"/>
<sequence length="265" mass="29690">MIESQRHSYHLVDPSPWPISGSLGALATTVGGVMYMHSFQGGATLLSLGLIFILYTMFVWWRDVLRESTLEGHHTKVVQLGPRYGSIPFIVSEVMFLFAFFWASSHSSLAPTVEIGGIWPPLGIWVLDPWEIPFLNTPILLSSGAAVTWAHHAILAGKEKRAVYALVATVSLALVFTGFQGMEYYQAPFTISDSIYGSTFFLATGFHGFHVIIGTLFLIICGIRQYLGHLTKEHHVGFEAAAWYWHFVDVVWLFLFVSIYWWGGI</sequence>
<proteinExistence type="evidence at transcript level"/>
<name>COX3_SOYBN</name>
<keyword id="KW-0472">Membrane</keyword>
<keyword id="KW-0496">Mitochondrion</keyword>
<keyword id="KW-0999">Mitochondrion inner membrane</keyword>
<keyword id="KW-1185">Reference proteome</keyword>
<keyword id="KW-0691">RNA editing</keyword>
<keyword id="KW-1278">Translocase</keyword>
<keyword id="KW-0812">Transmembrane</keyword>
<keyword id="KW-1133">Transmembrane helix</keyword>
<accession>P14853</accession>
<accession>M1FN28</accession>
<reference key="1">
    <citation type="journal article" date="1989" name="Plant Mol. Biol.">
        <title>Cytochrome oxidase subunit III gene from soybean mitochondria.</title>
        <authorList>
            <person name="Grabau E.A."/>
            <person name="Gengenbach B.G."/>
        </authorList>
    </citation>
    <scope>NUCLEOTIDE SEQUENCE [GENOMIC DNA]</scope>
    <source>
        <strain>cv. Williams 82</strain>
    </source>
</reference>
<reference key="2">
    <citation type="journal article" date="2013" name="PLoS ONE">
        <title>The mitochondrial genome of soybean reveals complex genome structures and gene evolution at intercellular and phylogenetic levels.</title>
        <authorList>
            <person name="Chang S."/>
            <person name="Wang Y."/>
            <person name="Lu J."/>
            <person name="Gai J."/>
            <person name="Li J."/>
            <person name="Chu P."/>
            <person name="Guan R."/>
            <person name="Zhao T."/>
        </authorList>
    </citation>
    <scope>NUCLEOTIDE SEQUENCE [LARGE SCALE GENOMIC DNA]</scope>
    <source>
        <strain>cv. Aiganhuang</strain>
        <tissue>Etiolated seedling</tissue>
    </source>
</reference>
<reference key="3">
    <citation type="journal article" date="1992" name="J. Mol. Evol.">
        <title>Genetic code and phylogenetic origin of oomycetous mitochondria.</title>
        <authorList>
            <person name="Karlovsky P."/>
            <person name="Fartmann B."/>
        </authorList>
    </citation>
    <scope>RNA EDITING</scope>
    <source>
        <strain>cv. Williams 82</strain>
    </source>
</reference>
<comment type="function">
    <text evidence="1">Component of the cytochrome c oxidase, the last enzyme in the mitochondrial electron transport chain which drives oxidative phosphorylation. The respiratory chain contains 3 multisubunit complexes succinate dehydrogenase (complex II, CII), ubiquinol-cytochrome c oxidoreductase (cytochrome b-c1 complex, complex III, CIII) and cytochrome c oxidase (complex IV, CIV), that cooperate to transfer electrons derived from NADH and succinate to molecular oxygen, creating an electrochemical gradient over the inner membrane that drives transmembrane transport and the ATP synthase. Cytochrome c oxidase is the component of the respiratory chain that catalyzes the reduction of oxygen to water. Electrons originating from reduced cytochrome c in the intermembrane space (IMS) are transferred via the dinuclear copper A center (CU(A)) of subunit 2 and heme A of subunit 1 to the active site in subunit 1, a binuclear center (BNC) formed by heme A3 and copper B (CU(B)). The BNC reduces molecular oxygen to 2 water molecules using 4 electrons from cytochrome c in the IMS and 4 protons from the mitochondrial matrix.</text>
</comment>
<comment type="catalytic activity">
    <reaction evidence="1">
        <text>4 Fe(II)-[cytochrome c] + O2 + 8 H(+)(in) = 4 Fe(III)-[cytochrome c] + 2 H2O + 4 H(+)(out)</text>
        <dbReference type="Rhea" id="RHEA:11436"/>
        <dbReference type="Rhea" id="RHEA-COMP:10350"/>
        <dbReference type="Rhea" id="RHEA-COMP:14399"/>
        <dbReference type="ChEBI" id="CHEBI:15377"/>
        <dbReference type="ChEBI" id="CHEBI:15378"/>
        <dbReference type="ChEBI" id="CHEBI:15379"/>
        <dbReference type="ChEBI" id="CHEBI:29033"/>
        <dbReference type="ChEBI" id="CHEBI:29034"/>
        <dbReference type="EC" id="7.1.1.9"/>
    </reaction>
    <physiologicalReaction direction="left-to-right" evidence="1">
        <dbReference type="Rhea" id="RHEA:11437"/>
    </physiologicalReaction>
</comment>
<comment type="subunit">
    <text evidence="1">Component of the cytochrome c oxidase (complex IV, CIV), a multisubunit enzyme composed of a catalytic core of 3 subunits and several supernumerary subunits. The complex exists as a monomer or a dimer and forms supercomplexes (SCs) in the inner mitochondrial membrane with ubiquinol-cytochrome c oxidoreductase (cytochrome b-c1 complex, complex III, CIII).</text>
</comment>
<comment type="subcellular location">
    <subcellularLocation>
        <location evidence="1">Mitochondrion inner membrane</location>
        <topology evidence="1">Multi-pass membrane protein</topology>
    </subcellularLocation>
</comment>
<comment type="RNA editing">
    <location>
        <position position="102" evidence="3"/>
    </location>
    <location>
        <position position="130" evidence="3"/>
    </location>
    <location>
        <position position="252" evidence="3"/>
    </location>
</comment>
<comment type="similarity">
    <text evidence="4">Belongs to the cytochrome c oxidase subunit 3 family.</text>
</comment>
<feature type="chain" id="PRO_0000183854" description="Cytochrome c oxidase subunit 3">
    <location>
        <begin position="1"/>
        <end position="265"/>
    </location>
</feature>
<feature type="transmembrane region" description="Helical" evidence="2">
    <location>
        <begin position="16"/>
        <end position="36"/>
    </location>
</feature>
<feature type="transmembrane region" description="Helical" evidence="2">
    <location>
        <begin position="41"/>
        <end position="61"/>
    </location>
</feature>
<feature type="transmembrane region" description="Helical" evidence="2">
    <location>
        <begin position="84"/>
        <end position="104"/>
    </location>
</feature>
<feature type="transmembrane region" description="Helical" evidence="2">
    <location>
        <begin position="115"/>
        <end position="135"/>
    </location>
</feature>
<feature type="transmembrane region" description="Helical" evidence="2">
    <location>
        <begin position="137"/>
        <end position="157"/>
    </location>
</feature>
<feature type="transmembrane region" description="Helical" evidence="2">
    <location>
        <begin position="162"/>
        <end position="182"/>
    </location>
</feature>
<feature type="transmembrane region" description="Helical" evidence="2">
    <location>
        <begin position="200"/>
        <end position="220"/>
    </location>
</feature>
<feature type="transmembrane region" description="Helical" evidence="2">
    <location>
        <begin position="245"/>
        <end position="265"/>
    </location>
</feature>
<organism>
    <name type="scientific">Glycine max</name>
    <name type="common">Soybean</name>
    <name type="synonym">Glycine hispida</name>
    <dbReference type="NCBI Taxonomy" id="3847"/>
    <lineage>
        <taxon>Eukaryota</taxon>
        <taxon>Viridiplantae</taxon>
        <taxon>Streptophyta</taxon>
        <taxon>Embryophyta</taxon>
        <taxon>Tracheophyta</taxon>
        <taxon>Spermatophyta</taxon>
        <taxon>Magnoliopsida</taxon>
        <taxon>eudicotyledons</taxon>
        <taxon>Gunneridae</taxon>
        <taxon>Pentapetalae</taxon>
        <taxon>rosids</taxon>
        <taxon>fabids</taxon>
        <taxon>Fabales</taxon>
        <taxon>Fabaceae</taxon>
        <taxon>Papilionoideae</taxon>
        <taxon>50 kb inversion clade</taxon>
        <taxon>NPAAA clade</taxon>
        <taxon>indigoferoid/millettioid clade</taxon>
        <taxon>Phaseoleae</taxon>
        <taxon>Glycine</taxon>
        <taxon>Glycine subgen. Soja</taxon>
    </lineage>
</organism>
<protein>
    <recommendedName>
        <fullName>Cytochrome c oxidase subunit 3</fullName>
        <ecNumber>7.1.1.9</ecNumber>
    </recommendedName>
    <alternativeName>
        <fullName>Cytochrome c oxidase polypeptide III</fullName>
    </alternativeName>
</protein>
<dbReference type="EC" id="7.1.1.9"/>
<dbReference type="EMBL" id="X15131">
    <property type="protein sequence ID" value="CAA33227.1"/>
    <property type="status" value="ALT_SEQ"/>
    <property type="molecule type" value="Genomic_DNA"/>
</dbReference>
<dbReference type="EMBL" id="JX463295">
    <property type="protein sequence ID" value="AFR34298.1"/>
    <property type="molecule type" value="Genomic_DNA"/>
</dbReference>
<dbReference type="PIR" id="S07468">
    <property type="entry name" value="OTSY3M"/>
</dbReference>
<dbReference type="RefSeq" id="XP_006592610.1">
    <property type="nucleotide sequence ID" value="XM_006592547.2"/>
</dbReference>
<dbReference type="RefSeq" id="YP_007516854.1">
    <property type="nucleotide sequence ID" value="NC_020455.1"/>
</dbReference>
<dbReference type="SMR" id="P14853"/>
<dbReference type="FunCoup" id="P14853">
    <property type="interactions" value="179"/>
</dbReference>
<dbReference type="STRING" id="3847.P14853"/>
<dbReference type="PaxDb" id="3847-GLYMA0405S00330.1"/>
<dbReference type="GeneID" id="15308561"/>
<dbReference type="KEGG" id="gmx:100780641"/>
<dbReference type="KEGG" id="gmx:15308561"/>
<dbReference type="eggNOG" id="KOG4664">
    <property type="taxonomic scope" value="Eukaryota"/>
</dbReference>
<dbReference type="InParanoid" id="P14853"/>
<dbReference type="OrthoDB" id="564124at2759"/>
<dbReference type="Proteomes" id="UP000008827">
    <property type="component" value="Mitochondrion"/>
</dbReference>
<dbReference type="GO" id="GO:0005743">
    <property type="term" value="C:mitochondrial inner membrane"/>
    <property type="evidence" value="ECO:0007669"/>
    <property type="project" value="UniProtKB-SubCell"/>
</dbReference>
<dbReference type="GO" id="GO:0005739">
    <property type="term" value="C:mitochondrion"/>
    <property type="evidence" value="ECO:0000318"/>
    <property type="project" value="GO_Central"/>
</dbReference>
<dbReference type="GO" id="GO:0004129">
    <property type="term" value="F:cytochrome-c oxidase activity"/>
    <property type="evidence" value="ECO:0007669"/>
    <property type="project" value="UniProtKB-EC"/>
</dbReference>
<dbReference type="GO" id="GO:0006123">
    <property type="term" value="P:mitochondrial electron transport, cytochrome c to oxygen"/>
    <property type="evidence" value="ECO:0000318"/>
    <property type="project" value="GO_Central"/>
</dbReference>
<dbReference type="CDD" id="cd01665">
    <property type="entry name" value="Cyt_c_Oxidase_III"/>
    <property type="match status" value="1"/>
</dbReference>
<dbReference type="FunFam" id="1.10.287.70:FF:000075">
    <property type="entry name" value="Cytochrome c oxidase subunit 3"/>
    <property type="match status" value="1"/>
</dbReference>
<dbReference type="FunFam" id="1.20.120.80:FF:000002">
    <property type="entry name" value="Cytochrome c oxidase subunit 3"/>
    <property type="match status" value="1"/>
</dbReference>
<dbReference type="Gene3D" id="1.10.287.70">
    <property type="match status" value="1"/>
</dbReference>
<dbReference type="Gene3D" id="1.20.120.80">
    <property type="entry name" value="Cytochrome c oxidase, subunit III, four-helix bundle"/>
    <property type="match status" value="1"/>
</dbReference>
<dbReference type="InterPro" id="IPR024791">
    <property type="entry name" value="Cyt_c/ubiquinol_Oxase_su3"/>
</dbReference>
<dbReference type="InterPro" id="IPR033945">
    <property type="entry name" value="Cyt_c_oxase_su3_dom"/>
</dbReference>
<dbReference type="InterPro" id="IPR000298">
    <property type="entry name" value="Cyt_c_oxidase-like_su3"/>
</dbReference>
<dbReference type="InterPro" id="IPR035973">
    <property type="entry name" value="Cyt_c_oxidase_su3-like_sf"/>
</dbReference>
<dbReference type="InterPro" id="IPR013833">
    <property type="entry name" value="Cyt_c_oxidase_su3_a-hlx"/>
</dbReference>
<dbReference type="PANTHER" id="PTHR11403:SF7">
    <property type="entry name" value="CYTOCHROME C OXIDASE SUBUNIT 3"/>
    <property type="match status" value="1"/>
</dbReference>
<dbReference type="PANTHER" id="PTHR11403">
    <property type="entry name" value="CYTOCHROME C OXIDASE SUBUNIT III"/>
    <property type="match status" value="1"/>
</dbReference>
<dbReference type="Pfam" id="PF00510">
    <property type="entry name" value="COX3"/>
    <property type="match status" value="1"/>
</dbReference>
<dbReference type="SUPFAM" id="SSF81452">
    <property type="entry name" value="Cytochrome c oxidase subunit III-like"/>
    <property type="match status" value="1"/>
</dbReference>
<dbReference type="PROSITE" id="PS50253">
    <property type="entry name" value="COX3"/>
    <property type="match status" value="1"/>
</dbReference>
<gene>
    <name type="primary">COX3</name>
    <name type="synonym">COXIII</name>
    <name type="ORF">GlmaxMp04</name>
</gene>
<evidence type="ECO:0000250" key="1">
    <source>
        <dbReference type="UniProtKB" id="P00420"/>
    </source>
</evidence>
<evidence type="ECO:0000255" key="2"/>
<evidence type="ECO:0000269" key="3">
    <source>
    </source>
</evidence>
<evidence type="ECO:0000305" key="4"/>